<accession>Q662I0</accession>
<organism>
    <name type="scientific">Borrelia garinii subsp. bavariensis (strain ATCC BAA-2496 / DSM 23469 / PBi)</name>
    <name type="common">Borreliella bavariensis</name>
    <dbReference type="NCBI Taxonomy" id="290434"/>
    <lineage>
        <taxon>Bacteria</taxon>
        <taxon>Pseudomonadati</taxon>
        <taxon>Spirochaetota</taxon>
        <taxon>Spirochaetia</taxon>
        <taxon>Spirochaetales</taxon>
        <taxon>Borreliaceae</taxon>
        <taxon>Borreliella</taxon>
    </lineage>
</organism>
<proteinExistence type="inferred from homology"/>
<gene>
    <name evidence="1" type="primary">csrA</name>
    <name type="ordered locus">BG0183</name>
</gene>
<name>CSRA_BORGP</name>
<feature type="chain" id="PRO_0000177051" description="Translational regulator CsrA">
    <location>
        <begin position="1"/>
        <end position="81"/>
    </location>
</feature>
<protein>
    <recommendedName>
        <fullName evidence="1">Translational regulator CsrA</fullName>
    </recommendedName>
</protein>
<dbReference type="EMBL" id="CP000013">
    <property type="protein sequence ID" value="AAU07041.1"/>
    <property type="molecule type" value="Genomic_DNA"/>
</dbReference>
<dbReference type="RefSeq" id="WP_011193532.1">
    <property type="nucleotide sequence ID" value="NZ_CP028872.1"/>
</dbReference>
<dbReference type="SMR" id="Q662I0"/>
<dbReference type="GeneID" id="45160976"/>
<dbReference type="KEGG" id="bga:BG0183"/>
<dbReference type="eggNOG" id="COG1551">
    <property type="taxonomic scope" value="Bacteria"/>
</dbReference>
<dbReference type="HOGENOM" id="CLU_164837_0_2_12"/>
<dbReference type="OrthoDB" id="9809061at2"/>
<dbReference type="Proteomes" id="UP000002276">
    <property type="component" value="Chromosome"/>
</dbReference>
<dbReference type="GO" id="GO:0005829">
    <property type="term" value="C:cytosol"/>
    <property type="evidence" value="ECO:0007669"/>
    <property type="project" value="TreeGrafter"/>
</dbReference>
<dbReference type="GO" id="GO:0048027">
    <property type="term" value="F:mRNA 5'-UTR binding"/>
    <property type="evidence" value="ECO:0007669"/>
    <property type="project" value="UniProtKB-UniRule"/>
</dbReference>
<dbReference type="GO" id="GO:0044781">
    <property type="term" value="P:bacterial-type flagellum organization"/>
    <property type="evidence" value="ECO:0007669"/>
    <property type="project" value="UniProtKB-KW"/>
</dbReference>
<dbReference type="GO" id="GO:0006402">
    <property type="term" value="P:mRNA catabolic process"/>
    <property type="evidence" value="ECO:0007669"/>
    <property type="project" value="InterPro"/>
</dbReference>
<dbReference type="GO" id="GO:0045947">
    <property type="term" value="P:negative regulation of translational initiation"/>
    <property type="evidence" value="ECO:0007669"/>
    <property type="project" value="UniProtKB-UniRule"/>
</dbReference>
<dbReference type="GO" id="GO:1902208">
    <property type="term" value="P:regulation of bacterial-type flagellum assembly"/>
    <property type="evidence" value="ECO:0007669"/>
    <property type="project" value="UniProtKB-UniRule"/>
</dbReference>
<dbReference type="GO" id="GO:0006109">
    <property type="term" value="P:regulation of carbohydrate metabolic process"/>
    <property type="evidence" value="ECO:0007669"/>
    <property type="project" value="InterPro"/>
</dbReference>
<dbReference type="FunFam" id="2.60.40.4380:FF:000002">
    <property type="entry name" value="Translational regulator CsrA"/>
    <property type="match status" value="1"/>
</dbReference>
<dbReference type="Gene3D" id="2.60.40.4380">
    <property type="entry name" value="Translational regulator CsrA"/>
    <property type="match status" value="1"/>
</dbReference>
<dbReference type="HAMAP" id="MF_00167">
    <property type="entry name" value="CsrA"/>
    <property type="match status" value="1"/>
</dbReference>
<dbReference type="InterPro" id="IPR003751">
    <property type="entry name" value="CsrA"/>
</dbReference>
<dbReference type="InterPro" id="IPR036107">
    <property type="entry name" value="CsrA_sf"/>
</dbReference>
<dbReference type="NCBIfam" id="TIGR00202">
    <property type="entry name" value="csrA"/>
    <property type="match status" value="1"/>
</dbReference>
<dbReference type="NCBIfam" id="NF002469">
    <property type="entry name" value="PRK01712.1"/>
    <property type="match status" value="1"/>
</dbReference>
<dbReference type="PANTHER" id="PTHR34984">
    <property type="entry name" value="CARBON STORAGE REGULATOR"/>
    <property type="match status" value="1"/>
</dbReference>
<dbReference type="PANTHER" id="PTHR34984:SF1">
    <property type="entry name" value="CARBON STORAGE REGULATOR"/>
    <property type="match status" value="1"/>
</dbReference>
<dbReference type="Pfam" id="PF02599">
    <property type="entry name" value="CsrA"/>
    <property type="match status" value="1"/>
</dbReference>
<dbReference type="SUPFAM" id="SSF117130">
    <property type="entry name" value="CsrA-like"/>
    <property type="match status" value="1"/>
</dbReference>
<comment type="function">
    <text evidence="1">A translational regulator that binds mRNA to regulate translation initiation and/or mRNA stability. Usually binds in the 5'-UTR at or near the Shine-Dalgarno sequence preventing ribosome-binding, thus repressing translation. Its main target seems to be the major flagellin gene, while its function is anatagonized by FliW.</text>
</comment>
<comment type="subunit">
    <text evidence="1">Homodimer; the beta-strands of each monomer intercalate to form a hydrophobic core, while the alpha-helices form wings that extend away from the core.</text>
</comment>
<comment type="subcellular location">
    <subcellularLocation>
        <location evidence="1">Cytoplasm</location>
    </subcellularLocation>
</comment>
<comment type="similarity">
    <text evidence="1">Belongs to the CsrA/RsmA family.</text>
</comment>
<reference key="1">
    <citation type="journal article" date="2004" name="Nucleic Acids Res.">
        <title>Comparative analysis of the Borrelia garinii genome.</title>
        <authorList>
            <person name="Gloeckner G."/>
            <person name="Lehmann R."/>
            <person name="Romualdi A."/>
            <person name="Pradella S."/>
            <person name="Schulte-Spechtel U."/>
            <person name="Schilhabel M."/>
            <person name="Wilske B."/>
            <person name="Suehnel J."/>
            <person name="Platzer M."/>
        </authorList>
    </citation>
    <scope>NUCLEOTIDE SEQUENCE [LARGE SCALE GENOMIC DNA]</scope>
    <source>
        <strain>ATCC BAA-2496 / DSM 23469 / PBi</strain>
    </source>
</reference>
<evidence type="ECO:0000255" key="1">
    <source>
        <dbReference type="HAMAP-Rule" id="MF_00167"/>
    </source>
</evidence>
<keyword id="KW-1005">Bacterial flagellum biogenesis</keyword>
<keyword id="KW-0963">Cytoplasm</keyword>
<keyword id="KW-0678">Repressor</keyword>
<keyword id="KW-0694">RNA-binding</keyword>
<keyword id="KW-0810">Translation regulation</keyword>
<sequence>MLVLSRKVNESIKINSDIEVLILEIKKDTVKIAIKAPENIKIFRSEIYKFIIEENKKSILKDKHNISKIKSLFNHYFKNEN</sequence>